<evidence type="ECO:0000250" key="1"/>
<evidence type="ECO:0000250" key="2">
    <source>
        <dbReference type="UniProtKB" id="O00206"/>
    </source>
</evidence>
<evidence type="ECO:0000250" key="3">
    <source>
        <dbReference type="UniProtKB" id="O60603"/>
    </source>
</evidence>
<evidence type="ECO:0000250" key="4">
    <source>
        <dbReference type="UniProtKB" id="Q9QUN7"/>
    </source>
</evidence>
<evidence type="ECO:0000255" key="5"/>
<evidence type="ECO:0000255" key="6">
    <source>
        <dbReference type="PROSITE-ProRule" id="PRU00204"/>
    </source>
</evidence>
<evidence type="ECO:0000269" key="7">
    <source>
    </source>
</evidence>
<evidence type="ECO:0000305" key="8"/>
<gene>
    <name type="primary">TLR2</name>
</gene>
<proteinExistence type="evidence at transcript level"/>
<comment type="function">
    <text evidence="3 4">Cooperates with LY96 to mediate the innate immune response to bacterial lipoproteins and other microbial cell wall components. Cooperates with TLR1 or TLR6 to mediate the innate immune response to bacterial lipoproteins or lipopeptides. Acts via MYD88 and TRAF6, leading to NF-kappa-B activation, cytokine secretion and the inflammatory response (By similarity). May also promote apoptosis in response to lipoproteins. Forms activation clusters composed of several receptors depending on the ligand, these clusters trigger signaling from the cell surface and subsequently are targeted to the Golgi in a lipid-raft dependent pathway. Forms the cluster TLR2:TLR6:CD14:CD36 in response to diacylated lipopeptides and TLR2:TLR1:CD14 in response to triacylated lipopeptides (By similarity).</text>
</comment>
<comment type="subunit">
    <text evidence="3 4">Interacts with LY96, TLR1 and TLR6 (via extracellular domain). TLR2 seems to exist in heterodimers with either TLR1 or TLR6 before stimulation by the ligand. The heterodimers form bigger oligomers in response to their corresponding ligands as well as further heterotypic associations with other receptors such as CD14 and/or CD36. Binds MYD88 (via TIR domain). Interacts with TICAM1. Interacts with CNPY3. Interacts with ATG16L1. Interacts with PPP1R11. Interacts with TICAM2. Interacts with TIRAP (By similarity).</text>
</comment>
<comment type="subcellular location">
    <subcellularLocation>
        <location evidence="4">Membrane</location>
        <topology evidence="5">Single-pass type I membrane protein</topology>
    </subcellularLocation>
    <subcellularLocation>
        <location evidence="4">Cytoplasmic vesicle</location>
        <location evidence="4">Phagosome membrane</location>
        <topology evidence="5">Single-pass type I membrane protein</topology>
    </subcellularLocation>
    <subcellularLocation>
        <location evidence="3">Membrane raft</location>
    </subcellularLocation>
    <text evidence="3">Does not reside in lipid rafts before stimulation but accumulates increasingly in the raft upon the presence of the microbial ligand. In response to diacylated lipoproteins, TLR2:TLR6 heterodimers are recruited in lipid rafts, this recruitment determine the intracellular targeting to the Golgi apparatus. Triacylated lipoproteins induce the same mechanism for TLR2:TLR1 heterodimers.</text>
</comment>
<comment type="domain">
    <text evidence="1">Ester-bound lipid substrates are bound through a crevice formed between the LRR 11 and LRR 12.</text>
</comment>
<comment type="domain">
    <text evidence="1">The ATG16L1-binding motif mediates interaction with ATG16L1.</text>
</comment>
<comment type="PTM">
    <text evidence="4">Ubiquitinated at Lys-754 by PPP1R11, leading to its degradation. Deubiquitinated by USP2.</text>
</comment>
<comment type="PTM">
    <text evidence="3">Glycosylation of Asn-442 is critical for secretion of the N-terminal ectodomain of TLR2.</text>
</comment>
<comment type="similarity">
    <text evidence="8">Belongs to the Toll-like receptor family.</text>
</comment>
<comment type="caution">
    <text evidence="2 8">In some plant proteins and in human SARM1, the TIR domain has NAD(+) hydrolase (NADase) activity (By similarity). However, despite the presence of the catalytic Asp residue, the isolated TIR domain of human TLR4 lacks NADase activity (By similarity). Based on this, it is unlikely that Toll-like receptors have NADase activity.</text>
</comment>
<sequence>MPRALWTAWVWAVIILSTEGASDQASSLSCDPTGVCDGHSRSLNSIPSGLTAGVKSLDLSNNDITYVGNRDLQRCVNLKTLRLGANEIHTVEEDSFFHLRNLEYLDLSYNRLSNLSSSWFRSLYVLKFLNLLGNLYKTLGETSLFSHLPNLRTLKVGNSNSFTEIHEKDFTGLTFLEELEISAQNLQIYVPKSLKSIQNISHLILHLKQPILLVDILVDIVSSLDCFELRDTNLHTFHFSEASISEMSTSVKKLIFRNVQFTDESFVEVVKLFNYVSGILEVEFDDCTHDGIGDFRALSLDRIRHLGNVETLTIRKLHIPQFFLFHDLSSIYPLTGRVKRVTIENSKVFLVPCLLSQHLKSLEYLDLSENLMSEETLKNSACKDAWPFLQTLVLRQNRLKSLEKTGELLLTLENLNNLDISKNNFLSMPETCQWPGKMKQLNLSSTRIHSLTQCLPQTLEILDVSNNNLDSFSLILPQLKELYISRNKLKTLPDASFLPVLSVMRISRNIINTFSKEQLDSFQQLKTLEAGGNNFICSCDFLSFTQGQQALGRVLVDWPDDYRCDSPSHVRGQRVQDARLSLSECHRAAVVSAACCALFLLLLLTGVLCHRFHGLWYMKMMWAWLQAKRKPRKAPRRDICYDAFVSYSERDSYWVENLMVQELEHFNPPFKLCLHKRDFIPGKWIIDNIIDSIEKSHKTIFVLSENFVKSEWCKYELDFSHFRLFDENNDAAILILLEPIDKKAIPQRFCKLRKIMNTKTYLEWPVDETQQEGFWLNLRAAIRS</sequence>
<keyword id="KW-0968">Cytoplasmic vesicle</keyword>
<keyword id="KW-1015">Disulfide bond</keyword>
<keyword id="KW-0325">Glycoprotein</keyword>
<keyword id="KW-0391">Immunity</keyword>
<keyword id="KW-0395">Inflammatory response</keyword>
<keyword id="KW-0399">Innate immunity</keyword>
<keyword id="KW-1017">Isopeptide bond</keyword>
<keyword id="KW-0433">Leucine-rich repeat</keyword>
<keyword id="KW-0472">Membrane</keyword>
<keyword id="KW-0520">NAD</keyword>
<keyword id="KW-0675">Receptor</keyword>
<keyword id="KW-1185">Reference proteome</keyword>
<keyword id="KW-0677">Repeat</keyword>
<keyword id="KW-0732">Signal</keyword>
<keyword id="KW-0812">Transmembrane</keyword>
<keyword id="KW-1133">Transmembrane helix</keyword>
<keyword id="KW-0832">Ubl conjugation</keyword>
<reference key="1">
    <citation type="submission" date="2001-04" db="EMBL/GenBank/DDBJ databases">
        <title>Role of bovine TLR2, TLR4 and CD14 in the recognition of bacterial constituents.</title>
        <authorList>
            <person name="Guionaud C.T."/>
            <person name="Dubey C."/>
            <person name="Zumkehr J.R."/>
            <person name="Sonstegard T.S."/>
            <person name="Jungi T.W."/>
        </authorList>
    </citation>
    <scope>NUCLEOTIDE SEQUENCE [MRNA]</scope>
</reference>
<reference key="2">
    <citation type="submission" date="2004-05" db="EMBL/GenBank/DDBJ databases">
        <title>Role of bovine TLRs in antigen presentation.</title>
        <authorList>
            <person name="Werling D."/>
            <person name="McGuire K."/>
            <person name="Glass E."/>
        </authorList>
    </citation>
    <scope>NUCLEOTIDE SEQUENCE [MRNA]</scope>
</reference>
<reference key="3">
    <citation type="journal article" date="2008" name="Genomics">
        <title>Analysis of sequence variability and protein domain architectures for bovine peptidoglycan recognition protein 1 and Toll-like receptors 2 and 6.</title>
        <authorList>
            <person name="Seabury C.M."/>
            <person name="Womack J.E."/>
        </authorList>
    </citation>
    <scope>NUCLEOTIDE SEQUENCE [GENOMIC DNA]</scope>
    <scope>VARIANTS GLU-290 AND LYS-783</scope>
    <source>
        <strain>Isolate 44</strain>
        <strain>Isolate 74</strain>
        <strain>Isolate 80</strain>
        <strain>Isolate JEW38</strain>
    </source>
</reference>
<protein>
    <recommendedName>
        <fullName>Toll-like receptor 2</fullName>
    </recommendedName>
    <cdAntigenName>CD282</cdAntigenName>
</protein>
<name>TLR2_BOVIN</name>
<feature type="signal peptide" evidence="5">
    <location>
        <begin position="1"/>
        <end position="20"/>
    </location>
</feature>
<feature type="chain" id="PRO_0000034707" description="Toll-like receptor 2">
    <location>
        <begin position="21"/>
        <end position="784"/>
    </location>
</feature>
<feature type="topological domain" description="Extracellular" evidence="5">
    <location>
        <begin position="21"/>
        <end position="587"/>
    </location>
</feature>
<feature type="transmembrane region" description="Helical" evidence="5">
    <location>
        <begin position="588"/>
        <end position="608"/>
    </location>
</feature>
<feature type="topological domain" description="Cytoplasmic" evidence="5">
    <location>
        <begin position="609"/>
        <end position="784"/>
    </location>
</feature>
<feature type="repeat" description="LRR 1">
    <location>
        <begin position="54"/>
        <end position="77"/>
    </location>
</feature>
<feature type="repeat" description="LRR 2">
    <location>
        <begin position="78"/>
        <end position="101"/>
    </location>
</feature>
<feature type="repeat" description="LRR 3">
    <location>
        <begin position="102"/>
        <end position="125"/>
    </location>
</feature>
<feature type="repeat" description="LRR 4">
    <location>
        <begin position="126"/>
        <end position="150"/>
    </location>
</feature>
<feature type="repeat" description="LRR 5">
    <location>
        <begin position="151"/>
        <end position="175"/>
    </location>
</feature>
<feature type="repeat" description="LRR 6">
    <location>
        <begin position="176"/>
        <end position="199"/>
    </location>
</feature>
<feature type="repeat" description="LRR 7">
    <location>
        <begin position="200"/>
        <end position="223"/>
    </location>
</feature>
<feature type="repeat" description="LRR 8">
    <location>
        <begin position="224"/>
        <end position="250"/>
    </location>
</feature>
<feature type="repeat" description="LRR 9">
    <location>
        <begin position="251"/>
        <end position="278"/>
    </location>
</feature>
<feature type="repeat" description="LRR 10">
    <location>
        <begin position="279"/>
        <end position="308"/>
    </location>
</feature>
<feature type="repeat" description="LRR 11">
    <location>
        <begin position="309"/>
        <end position="337"/>
    </location>
</feature>
<feature type="repeat" description="LRR 12">
    <location>
        <begin position="338"/>
        <end position="361"/>
    </location>
</feature>
<feature type="repeat" description="LRR 13">
    <location>
        <begin position="362"/>
        <end position="388"/>
    </location>
</feature>
<feature type="repeat" description="LRR 14">
    <location>
        <begin position="389"/>
        <end position="414"/>
    </location>
</feature>
<feature type="repeat" description="LRR 15">
    <location>
        <begin position="415"/>
        <end position="437"/>
    </location>
</feature>
<feature type="repeat" description="LRR 16">
    <location>
        <begin position="438"/>
        <end position="457"/>
    </location>
</feature>
<feature type="repeat" description="LRR 17">
    <location>
        <begin position="458"/>
        <end position="478"/>
    </location>
</feature>
<feature type="repeat" description="LRR 18">
    <location>
        <begin position="479"/>
        <end position="500"/>
    </location>
</feature>
<feature type="repeat" description="LRR 19">
    <location>
        <begin position="501"/>
        <end position="524"/>
    </location>
</feature>
<feature type="domain" description="LRRCT">
    <location>
        <begin position="525"/>
        <end position="579"/>
    </location>
</feature>
<feature type="domain" description="TIR" evidence="6">
    <location>
        <begin position="639"/>
        <end position="782"/>
    </location>
</feature>
<feature type="short sequence motif" description="ATG16L1-binding motif">
    <location>
        <begin position="761"/>
        <end position="778"/>
    </location>
</feature>
<feature type="site" description="Interaction with bacterial lipopeptide" evidence="1">
    <location>
        <position position="349"/>
    </location>
</feature>
<feature type="glycosylation site" description="N-linked (GlcNAc...) asparagine" evidence="5">
    <location>
        <position position="114"/>
    </location>
</feature>
<feature type="glycosylation site" description="N-linked (GlcNAc...) asparagine" evidence="5">
    <location>
        <position position="199"/>
    </location>
</feature>
<feature type="glycosylation site" description="N-linked (GlcNAc...) asparagine" evidence="5">
    <location>
        <position position="442"/>
    </location>
</feature>
<feature type="disulfide bond" evidence="1">
    <location>
        <begin position="30"/>
        <end position="36"/>
    </location>
</feature>
<feature type="disulfide bond" evidence="1">
    <location>
        <begin position="353"/>
        <end position="382"/>
    </location>
</feature>
<feature type="disulfide bond" evidence="1">
    <location>
        <begin position="432"/>
        <end position="454"/>
    </location>
</feature>
<feature type="cross-link" description="Glycyl lysine isopeptide (Lys-Gly) (interchain with G-Cter in ubiquitin)" evidence="3">
    <location>
        <position position="754"/>
    </location>
</feature>
<feature type="sequence variant" evidence="7">
    <original>D</original>
    <variation>E</variation>
    <location>
        <position position="290"/>
    </location>
</feature>
<feature type="sequence variant" evidence="7">
    <original>R</original>
    <variation>K</variation>
    <location>
        <position position="783"/>
    </location>
</feature>
<accession>Q95LA9</accession>
<accession>B5T265</accession>
<accession>B5T266</accession>
<accession>B5T271</accession>
<accession>Q6GV20</accession>
<accession>Q9GL66</accession>
<organism>
    <name type="scientific">Bos taurus</name>
    <name type="common">Bovine</name>
    <dbReference type="NCBI Taxonomy" id="9913"/>
    <lineage>
        <taxon>Eukaryota</taxon>
        <taxon>Metazoa</taxon>
        <taxon>Chordata</taxon>
        <taxon>Craniata</taxon>
        <taxon>Vertebrata</taxon>
        <taxon>Euteleostomi</taxon>
        <taxon>Mammalia</taxon>
        <taxon>Eutheria</taxon>
        <taxon>Laurasiatheria</taxon>
        <taxon>Artiodactyla</taxon>
        <taxon>Ruminantia</taxon>
        <taxon>Pecora</taxon>
        <taxon>Bovidae</taxon>
        <taxon>Bovinae</taxon>
        <taxon>Bos</taxon>
    </lineage>
</organism>
<dbReference type="EMBL" id="AF368419">
    <property type="protein sequence ID" value="AAL16722.1"/>
    <property type="molecule type" value="mRNA"/>
</dbReference>
<dbReference type="EMBL" id="AF310951">
    <property type="protein sequence ID" value="AAG32060.1"/>
    <property type="molecule type" value="mRNA"/>
</dbReference>
<dbReference type="EMBL" id="AY634629">
    <property type="protein sequence ID" value="AAT48487.1"/>
    <property type="molecule type" value="mRNA"/>
</dbReference>
<dbReference type="EMBL" id="EU746459">
    <property type="protein sequence ID" value="ACH92788.1"/>
    <property type="molecule type" value="Genomic_DNA"/>
</dbReference>
<dbReference type="EMBL" id="EU746460">
    <property type="protein sequence ID" value="ACH92789.1"/>
    <property type="molecule type" value="Genomic_DNA"/>
</dbReference>
<dbReference type="EMBL" id="EU746464">
    <property type="protein sequence ID" value="ACH92793.1"/>
    <property type="molecule type" value="Genomic_DNA"/>
</dbReference>
<dbReference type="EMBL" id="EU746465">
    <property type="protein sequence ID" value="ACH92794.1"/>
    <property type="molecule type" value="Genomic_DNA"/>
</dbReference>
<dbReference type="RefSeq" id="NP_776622.1">
    <property type="nucleotide sequence ID" value="NM_174197.2"/>
</dbReference>
<dbReference type="SMR" id="Q95LA9"/>
<dbReference type="FunCoup" id="Q95LA9">
    <property type="interactions" value="416"/>
</dbReference>
<dbReference type="STRING" id="9913.ENSBTAP00000010530"/>
<dbReference type="GlyCosmos" id="Q95LA9">
    <property type="glycosylation" value="3 sites, No reported glycans"/>
</dbReference>
<dbReference type="GlyGen" id="Q95LA9">
    <property type="glycosylation" value="3 sites"/>
</dbReference>
<dbReference type="PaxDb" id="9913-ENSBTAP00000010530"/>
<dbReference type="GeneID" id="281534"/>
<dbReference type="KEGG" id="bta:281534"/>
<dbReference type="CTD" id="7097"/>
<dbReference type="eggNOG" id="KOG4641">
    <property type="taxonomic scope" value="Eukaryota"/>
</dbReference>
<dbReference type="InParanoid" id="Q95LA9"/>
<dbReference type="OrthoDB" id="1081807at2759"/>
<dbReference type="Proteomes" id="UP000009136">
    <property type="component" value="Unplaced"/>
</dbReference>
<dbReference type="GO" id="GO:0005794">
    <property type="term" value="C:Golgi apparatus"/>
    <property type="evidence" value="ECO:0000250"/>
    <property type="project" value="UniProtKB"/>
</dbReference>
<dbReference type="GO" id="GO:0045121">
    <property type="term" value="C:membrane raft"/>
    <property type="evidence" value="ECO:0000250"/>
    <property type="project" value="UniProtKB"/>
</dbReference>
<dbReference type="GO" id="GO:0030670">
    <property type="term" value="C:phagocytic vesicle membrane"/>
    <property type="evidence" value="ECO:0007669"/>
    <property type="project" value="UniProtKB-SubCell"/>
</dbReference>
<dbReference type="GO" id="GO:0005886">
    <property type="term" value="C:plasma membrane"/>
    <property type="evidence" value="ECO:0000318"/>
    <property type="project" value="GO_Central"/>
</dbReference>
<dbReference type="GO" id="GO:0043235">
    <property type="term" value="C:receptor complex"/>
    <property type="evidence" value="ECO:0000318"/>
    <property type="project" value="GO_Central"/>
</dbReference>
<dbReference type="GO" id="GO:0061809">
    <property type="term" value="F:NAD+ nucleosidase activity, cyclic ADP-ribose generating"/>
    <property type="evidence" value="ECO:0007669"/>
    <property type="project" value="UniProtKB-EC"/>
</dbReference>
<dbReference type="GO" id="GO:0038023">
    <property type="term" value="F:signaling receptor activity"/>
    <property type="evidence" value="ECO:0000318"/>
    <property type="project" value="GO_Central"/>
</dbReference>
<dbReference type="GO" id="GO:0004888">
    <property type="term" value="F:transmembrane signaling receptor activity"/>
    <property type="evidence" value="ECO:0007669"/>
    <property type="project" value="InterPro"/>
</dbReference>
<dbReference type="GO" id="GO:0042497">
    <property type="term" value="F:triacyl lipopeptide binding"/>
    <property type="evidence" value="ECO:0000318"/>
    <property type="project" value="GO_Central"/>
</dbReference>
<dbReference type="GO" id="GO:0071726">
    <property type="term" value="P:cellular response to diacyl bacterial lipopeptide"/>
    <property type="evidence" value="ECO:0000250"/>
    <property type="project" value="UniProtKB"/>
</dbReference>
<dbReference type="GO" id="GO:0071727">
    <property type="term" value="P:cellular response to triacyl bacterial lipopeptide"/>
    <property type="evidence" value="ECO:0000250"/>
    <property type="project" value="UniProtKB"/>
</dbReference>
<dbReference type="GO" id="GO:0006954">
    <property type="term" value="P:inflammatory response"/>
    <property type="evidence" value="ECO:0000318"/>
    <property type="project" value="GO_Central"/>
</dbReference>
<dbReference type="GO" id="GO:0045087">
    <property type="term" value="P:innate immune response"/>
    <property type="evidence" value="ECO:0007669"/>
    <property type="project" value="UniProtKB-KW"/>
</dbReference>
<dbReference type="GO" id="GO:0002224">
    <property type="term" value="P:toll-like receptor signaling pathway"/>
    <property type="evidence" value="ECO:0000318"/>
    <property type="project" value="GO_Central"/>
</dbReference>
<dbReference type="FunFam" id="3.40.50.10140:FF:000001">
    <property type="entry name" value="Toll-like receptor 2"/>
    <property type="match status" value="1"/>
</dbReference>
<dbReference type="FunFam" id="3.80.10.10:FF:000046">
    <property type="entry name" value="Toll-like receptor 2"/>
    <property type="match status" value="1"/>
</dbReference>
<dbReference type="Gene3D" id="3.80.10.10">
    <property type="entry name" value="Ribonuclease Inhibitor"/>
    <property type="match status" value="1"/>
</dbReference>
<dbReference type="Gene3D" id="3.40.50.10140">
    <property type="entry name" value="Toll/interleukin-1 receptor homology (TIR) domain"/>
    <property type="match status" value="1"/>
</dbReference>
<dbReference type="InterPro" id="IPR000483">
    <property type="entry name" value="Cys-rich_flank_reg_C"/>
</dbReference>
<dbReference type="InterPro" id="IPR001611">
    <property type="entry name" value="Leu-rich_rpt"/>
</dbReference>
<dbReference type="InterPro" id="IPR003591">
    <property type="entry name" value="Leu-rich_rpt_typical-subtyp"/>
</dbReference>
<dbReference type="InterPro" id="IPR032675">
    <property type="entry name" value="LRR_dom_sf"/>
</dbReference>
<dbReference type="InterPro" id="IPR000157">
    <property type="entry name" value="TIR_dom"/>
</dbReference>
<dbReference type="InterPro" id="IPR017241">
    <property type="entry name" value="Toll-like_receptor"/>
</dbReference>
<dbReference type="InterPro" id="IPR035897">
    <property type="entry name" value="Toll_tir_struct_dom_sf"/>
</dbReference>
<dbReference type="PANTHER" id="PTHR24365">
    <property type="entry name" value="TOLL-LIKE RECEPTOR"/>
    <property type="match status" value="1"/>
</dbReference>
<dbReference type="PANTHER" id="PTHR24365:SF17">
    <property type="entry name" value="TOLL-LIKE RECEPTOR 2"/>
    <property type="match status" value="1"/>
</dbReference>
<dbReference type="Pfam" id="PF13855">
    <property type="entry name" value="LRR_8"/>
    <property type="match status" value="2"/>
</dbReference>
<dbReference type="Pfam" id="PF01582">
    <property type="entry name" value="TIR"/>
    <property type="match status" value="1"/>
</dbReference>
<dbReference type="PIRSF" id="PIRSF037595">
    <property type="entry name" value="Toll-like_receptor"/>
    <property type="match status" value="1"/>
</dbReference>
<dbReference type="PRINTS" id="PR01537">
    <property type="entry name" value="INTRLKN1R1F"/>
</dbReference>
<dbReference type="PRINTS" id="PR00019">
    <property type="entry name" value="LEURICHRPT"/>
</dbReference>
<dbReference type="SMART" id="SM00364">
    <property type="entry name" value="LRR_BAC"/>
    <property type="match status" value="5"/>
</dbReference>
<dbReference type="SMART" id="SM00365">
    <property type="entry name" value="LRR_SD22"/>
    <property type="match status" value="6"/>
</dbReference>
<dbReference type="SMART" id="SM00369">
    <property type="entry name" value="LRR_TYP"/>
    <property type="match status" value="6"/>
</dbReference>
<dbReference type="SMART" id="SM00082">
    <property type="entry name" value="LRRCT"/>
    <property type="match status" value="1"/>
</dbReference>
<dbReference type="SMART" id="SM00255">
    <property type="entry name" value="TIR"/>
    <property type="match status" value="1"/>
</dbReference>
<dbReference type="SUPFAM" id="SSF52058">
    <property type="entry name" value="L domain-like"/>
    <property type="match status" value="1"/>
</dbReference>
<dbReference type="SUPFAM" id="SSF52047">
    <property type="entry name" value="RNI-like"/>
    <property type="match status" value="1"/>
</dbReference>
<dbReference type="SUPFAM" id="SSF52200">
    <property type="entry name" value="Toll/Interleukin receptor TIR domain"/>
    <property type="match status" value="1"/>
</dbReference>
<dbReference type="PROSITE" id="PS51450">
    <property type="entry name" value="LRR"/>
    <property type="match status" value="11"/>
</dbReference>
<dbReference type="PROSITE" id="PS50104">
    <property type="entry name" value="TIR"/>
    <property type="match status" value="1"/>
</dbReference>